<proteinExistence type="inferred from homology"/>
<gene>
    <name type="primary">efg1</name>
    <name type="ORF">ACLA_091940</name>
</gene>
<feature type="chain" id="PRO_0000330259" description="rRNA-processing protein efg1">
    <location>
        <begin position="1"/>
        <end position="315"/>
    </location>
</feature>
<feature type="region of interest" description="Disordered" evidence="3">
    <location>
        <begin position="1"/>
        <end position="43"/>
    </location>
</feature>
<feature type="region of interest" description="Disordered" evidence="3">
    <location>
        <begin position="173"/>
        <end position="201"/>
    </location>
</feature>
<feature type="region of interest" description="Disordered" evidence="3">
    <location>
        <begin position="234"/>
        <end position="315"/>
    </location>
</feature>
<feature type="coiled-coil region" evidence="2">
    <location>
        <begin position="41"/>
        <end position="91"/>
    </location>
</feature>
<feature type="compositionally biased region" description="Low complexity" evidence="3">
    <location>
        <begin position="179"/>
        <end position="190"/>
    </location>
</feature>
<feature type="compositionally biased region" description="Basic and acidic residues" evidence="3">
    <location>
        <begin position="245"/>
        <end position="258"/>
    </location>
</feature>
<feature type="compositionally biased region" description="Basic and acidic residues" evidence="3">
    <location>
        <begin position="269"/>
        <end position="281"/>
    </location>
</feature>
<feature type="compositionally biased region" description="Basic and acidic residues" evidence="3">
    <location>
        <begin position="288"/>
        <end position="301"/>
    </location>
</feature>
<reference key="1">
    <citation type="journal article" date="2008" name="PLoS Genet.">
        <title>Genomic islands in the pathogenic filamentous fungus Aspergillus fumigatus.</title>
        <authorList>
            <person name="Fedorova N.D."/>
            <person name="Khaldi N."/>
            <person name="Joardar V.S."/>
            <person name="Maiti R."/>
            <person name="Amedeo P."/>
            <person name="Anderson M.J."/>
            <person name="Crabtree J."/>
            <person name="Silva J.C."/>
            <person name="Badger J.H."/>
            <person name="Albarraq A."/>
            <person name="Angiuoli S."/>
            <person name="Bussey H."/>
            <person name="Bowyer P."/>
            <person name="Cotty P.J."/>
            <person name="Dyer P.S."/>
            <person name="Egan A."/>
            <person name="Galens K."/>
            <person name="Fraser-Liggett C.M."/>
            <person name="Haas B.J."/>
            <person name="Inman J.M."/>
            <person name="Kent R."/>
            <person name="Lemieux S."/>
            <person name="Malavazi I."/>
            <person name="Orvis J."/>
            <person name="Roemer T."/>
            <person name="Ronning C.M."/>
            <person name="Sundaram J.P."/>
            <person name="Sutton G."/>
            <person name="Turner G."/>
            <person name="Venter J.C."/>
            <person name="White O.R."/>
            <person name="Whitty B.R."/>
            <person name="Youngman P."/>
            <person name="Wolfe K.H."/>
            <person name="Goldman G.H."/>
            <person name="Wortman J.R."/>
            <person name="Jiang B."/>
            <person name="Denning D.W."/>
            <person name="Nierman W.C."/>
        </authorList>
    </citation>
    <scope>NUCLEOTIDE SEQUENCE [LARGE SCALE GENOMIC DNA]</scope>
    <source>
        <strain>ATCC 1007 / CBS 513.65 / DSM 816 / NCTC 3887 / NRRL 1 / QM 1276 / 107</strain>
    </source>
</reference>
<dbReference type="EMBL" id="DS027052">
    <property type="protein sequence ID" value="EAW11496.1"/>
    <property type="molecule type" value="Genomic_DNA"/>
</dbReference>
<dbReference type="RefSeq" id="XP_001272922.1">
    <property type="nucleotide sequence ID" value="XM_001272921.1"/>
</dbReference>
<dbReference type="SMR" id="A1CF47"/>
<dbReference type="STRING" id="344612.A1CF47"/>
<dbReference type="EnsemblFungi" id="EAW11496">
    <property type="protein sequence ID" value="EAW11496"/>
    <property type="gene ID" value="ACLA_091940"/>
</dbReference>
<dbReference type="GeneID" id="4705167"/>
<dbReference type="KEGG" id="act:ACLA_091940"/>
<dbReference type="VEuPathDB" id="FungiDB:ACLA_091940"/>
<dbReference type="eggNOG" id="KOG4484">
    <property type="taxonomic scope" value="Eukaryota"/>
</dbReference>
<dbReference type="HOGENOM" id="CLU_066912_0_0_1"/>
<dbReference type="OMA" id="KCMEEGT"/>
<dbReference type="OrthoDB" id="47732at2759"/>
<dbReference type="Proteomes" id="UP000006701">
    <property type="component" value="Unassembled WGS sequence"/>
</dbReference>
<dbReference type="GO" id="GO:0005730">
    <property type="term" value="C:nucleolus"/>
    <property type="evidence" value="ECO:0007669"/>
    <property type="project" value="UniProtKB-SubCell"/>
</dbReference>
<dbReference type="GO" id="GO:0030688">
    <property type="term" value="C:preribosome, small subunit precursor"/>
    <property type="evidence" value="ECO:0007669"/>
    <property type="project" value="TreeGrafter"/>
</dbReference>
<dbReference type="GO" id="GO:0000462">
    <property type="term" value="P:maturation of SSU-rRNA from tricistronic rRNA transcript (SSU-rRNA, 5.8S rRNA, LSU-rRNA)"/>
    <property type="evidence" value="ECO:0007669"/>
    <property type="project" value="TreeGrafter"/>
</dbReference>
<dbReference type="InterPro" id="IPR019310">
    <property type="entry name" value="Efg1"/>
</dbReference>
<dbReference type="InterPro" id="IPR050786">
    <property type="entry name" value="EFG1_rRNA-proc"/>
</dbReference>
<dbReference type="PANTHER" id="PTHR33911">
    <property type="entry name" value="RRNA-PROCESSING PROTEIN EFG1"/>
    <property type="match status" value="1"/>
</dbReference>
<dbReference type="PANTHER" id="PTHR33911:SF1">
    <property type="entry name" value="RRNA-PROCESSING PROTEIN EFG1"/>
    <property type="match status" value="1"/>
</dbReference>
<dbReference type="Pfam" id="PF10153">
    <property type="entry name" value="Efg1"/>
    <property type="match status" value="1"/>
</dbReference>
<name>EFG1P_ASPCL</name>
<sequence length="315" mass="35282">MPREFDPRAASKRKHGDTSEDFAPAKKKKILPPKHEHNHPSVNELKKRIRDVKRLLNRVDLPADARIIQERALAGYEKDLEDELARRNRSQMIKKYHFVRFLDRKAATKDLNRLLRREKEISKSDADSATKDGKLAALAKEIHVARVNQNYTIYYPLTQKYIALYAEKKQKKDKKGPTASSDNQSQSDSDGGAGAGSKLIFSTTGVRPPMWQVVEKCMEEGTLDLLREGKLDAQIGGADSPAPESKAKVTDDAGKVRNQDTVSKKSSGKSREADASKSKQDKKSKRAPAKEDAYRDAKNNDNDDGDESDGGFFEI</sequence>
<accession>A1CF47</accession>
<evidence type="ECO:0000250" key="1"/>
<evidence type="ECO:0000255" key="2"/>
<evidence type="ECO:0000256" key="3">
    <source>
        <dbReference type="SAM" id="MobiDB-lite"/>
    </source>
</evidence>
<evidence type="ECO:0000305" key="4"/>
<protein>
    <recommendedName>
        <fullName>rRNA-processing protein efg1</fullName>
    </recommendedName>
</protein>
<comment type="function">
    <text evidence="1">Involved in rRNA processing.</text>
</comment>
<comment type="subcellular location">
    <subcellularLocation>
        <location evidence="1">Nucleus</location>
        <location evidence="1">Nucleolus</location>
    </subcellularLocation>
</comment>
<comment type="similarity">
    <text evidence="4">Belongs to the EFG1 family.</text>
</comment>
<keyword id="KW-0175">Coiled coil</keyword>
<keyword id="KW-0539">Nucleus</keyword>
<keyword id="KW-1185">Reference proteome</keyword>
<keyword id="KW-0698">rRNA processing</keyword>
<organism>
    <name type="scientific">Aspergillus clavatus (strain ATCC 1007 / CBS 513.65 / DSM 816 / NCTC 3887 / NRRL 1 / QM 1276 / 107)</name>
    <dbReference type="NCBI Taxonomy" id="344612"/>
    <lineage>
        <taxon>Eukaryota</taxon>
        <taxon>Fungi</taxon>
        <taxon>Dikarya</taxon>
        <taxon>Ascomycota</taxon>
        <taxon>Pezizomycotina</taxon>
        <taxon>Eurotiomycetes</taxon>
        <taxon>Eurotiomycetidae</taxon>
        <taxon>Eurotiales</taxon>
        <taxon>Aspergillaceae</taxon>
        <taxon>Aspergillus</taxon>
        <taxon>Aspergillus subgen. Fumigati</taxon>
    </lineage>
</organism>